<keyword id="KW-0067">ATP-binding</keyword>
<keyword id="KW-0963">Cytoplasm</keyword>
<keyword id="KW-0418">Kinase</keyword>
<keyword id="KW-0547">Nucleotide-binding</keyword>
<keyword id="KW-0597">Phosphoprotein</keyword>
<keyword id="KW-1185">Reference proteome</keyword>
<keyword id="KW-0346">Stress response</keyword>
<keyword id="KW-0808">Transferase</keyword>
<keyword id="KW-0902">Two-component regulatory system</keyword>
<dbReference type="EC" id="2.7.13.3" evidence="1"/>
<dbReference type="EMBL" id="AE000516">
    <property type="protein sequence ID" value="AAK47658.1"/>
    <property type="molecule type" value="Genomic_DNA"/>
</dbReference>
<dbReference type="PIR" id="E70596">
    <property type="entry name" value="E70596"/>
</dbReference>
<dbReference type="RefSeq" id="WP_003416886.1">
    <property type="nucleotide sequence ID" value="NZ_KK341227.1"/>
</dbReference>
<dbReference type="SMR" id="P9WGL4"/>
<dbReference type="KEGG" id="mtc:MT3316"/>
<dbReference type="PATRIC" id="fig|83331.31.peg.3571"/>
<dbReference type="HOGENOM" id="CLU_045351_1_0_11"/>
<dbReference type="Proteomes" id="UP000001020">
    <property type="component" value="Chromosome"/>
</dbReference>
<dbReference type="GO" id="GO:0005737">
    <property type="term" value="C:cytoplasm"/>
    <property type="evidence" value="ECO:0007669"/>
    <property type="project" value="UniProtKB-SubCell"/>
</dbReference>
<dbReference type="GO" id="GO:0005524">
    <property type="term" value="F:ATP binding"/>
    <property type="evidence" value="ECO:0007669"/>
    <property type="project" value="UniProtKB-KW"/>
</dbReference>
<dbReference type="GO" id="GO:0004673">
    <property type="term" value="F:protein histidine kinase activity"/>
    <property type="evidence" value="ECO:0007669"/>
    <property type="project" value="UniProtKB-EC"/>
</dbReference>
<dbReference type="GO" id="GO:0000160">
    <property type="term" value="P:phosphorelay signal transduction system"/>
    <property type="evidence" value="ECO:0007669"/>
    <property type="project" value="UniProtKB-KW"/>
</dbReference>
<dbReference type="CDD" id="cd16951">
    <property type="entry name" value="HATPase_EL346-LOV-HK-like"/>
    <property type="match status" value="1"/>
</dbReference>
<dbReference type="FunFam" id="3.30.565.10:FF:000071">
    <property type="entry name" value="Sensor histidine kinase"/>
    <property type="match status" value="1"/>
</dbReference>
<dbReference type="Gene3D" id="3.30.450.280">
    <property type="entry name" value="GAF domain"/>
    <property type="match status" value="1"/>
</dbReference>
<dbReference type="Gene3D" id="3.30.565.10">
    <property type="entry name" value="Histidine kinase-like ATPase, C-terminal domain"/>
    <property type="match status" value="1"/>
</dbReference>
<dbReference type="Gene3D" id="3.30.450.20">
    <property type="entry name" value="PAS domain"/>
    <property type="match status" value="1"/>
</dbReference>
<dbReference type="InterPro" id="IPR038424">
    <property type="entry name" value="H_kinase_PdtaS_GAF_sf"/>
</dbReference>
<dbReference type="InterPro" id="IPR036890">
    <property type="entry name" value="HATPase_C_sf"/>
</dbReference>
<dbReference type="InterPro" id="IPR005467">
    <property type="entry name" value="His_kinase_dom"/>
</dbReference>
<dbReference type="InterPro" id="IPR035965">
    <property type="entry name" value="PAS-like_dom_sf"/>
</dbReference>
<dbReference type="InterPro" id="IPR022066">
    <property type="entry name" value="PdtaS_GAF"/>
</dbReference>
<dbReference type="InterPro" id="IPR011495">
    <property type="entry name" value="Sig_transdc_His_kin_sub2_dim/P"/>
</dbReference>
<dbReference type="PANTHER" id="PTHR41523:SF8">
    <property type="entry name" value="ETHYLENE RESPONSE SENSOR PROTEIN"/>
    <property type="match status" value="1"/>
</dbReference>
<dbReference type="PANTHER" id="PTHR41523">
    <property type="entry name" value="TWO-COMPONENT SYSTEM SENSOR PROTEIN"/>
    <property type="match status" value="1"/>
</dbReference>
<dbReference type="Pfam" id="PF12282">
    <property type="entry name" value="GAF_PdtaS"/>
    <property type="match status" value="1"/>
</dbReference>
<dbReference type="Pfam" id="PF02518">
    <property type="entry name" value="HATPase_c"/>
    <property type="match status" value="1"/>
</dbReference>
<dbReference type="Pfam" id="PF07568">
    <property type="entry name" value="HisKA_2"/>
    <property type="match status" value="1"/>
</dbReference>
<dbReference type="SMART" id="SM00387">
    <property type="entry name" value="HATPase_c"/>
    <property type="match status" value="1"/>
</dbReference>
<dbReference type="SUPFAM" id="SSF55874">
    <property type="entry name" value="ATPase domain of HSP90 chaperone/DNA topoisomerase II/histidine kinase"/>
    <property type="match status" value="1"/>
</dbReference>
<dbReference type="SUPFAM" id="SSF55785">
    <property type="entry name" value="PYP-like sensor domain (PAS domain)"/>
    <property type="match status" value="1"/>
</dbReference>
<dbReference type="PROSITE" id="PS50109">
    <property type="entry name" value="HIS_KIN"/>
    <property type="match status" value="1"/>
</dbReference>
<feature type="chain" id="PRO_0000428341" description="Sensor histidine kinase PdtaS">
    <location>
        <begin position="1"/>
        <end position="501"/>
    </location>
</feature>
<feature type="domain" description="Histidine kinase" evidence="3">
    <location>
        <begin position="300"/>
        <end position="495"/>
    </location>
</feature>
<feature type="region of interest" description="GAF" evidence="2">
    <location>
        <begin position="4"/>
        <end position="150"/>
    </location>
</feature>
<feature type="region of interest" description="PAS-like" evidence="2">
    <location>
        <begin position="179"/>
        <end position="291"/>
    </location>
</feature>
<feature type="modified residue" description="Phosphohistidine; by autocatalysis" evidence="3">
    <location>
        <position position="303"/>
    </location>
</feature>
<name>PDTAS_MYCTO</name>
<comment type="function">
    <text evidence="1">Member of the two-component regulatory system PdtaR/PdtaS. This two-component system plays an essential role in mycobacterial adaptation to poor nutrient conditions. Nutrient deprivation results in increasing intracellular concentrations of cyclic diguanosine monophosphate (c-di-GMP), which binds to the PdtaS sensor and promotes its autophosphorylation, leading to the activation of the signaling cascade. The phosphate group is then transferred to PdtaR.</text>
</comment>
<comment type="function">
    <text evidence="1">In addition, the PdtaR/PdtaS two-component system controls copper and nitric oxide (NO) resistance downstream of the intramembrane protease Rip1. This coupled Rip1/PdtaS/PdtaR circuit controls NO resistance and acute lung infection in mice by relieving PdtaR/PdtaS-mediated repression of isonitrile chalkophore biosynthesis. Two signals are required to fully inactivate the PdtaR/PdtaS system and mediate NO resistance: a cytoplasmic inhibitory signal through the PdtaS kinase mediated by direct sensing of NO and the production of PPE1-5', an NO-induced small RNA, to sequester PdtaR.</text>
</comment>
<comment type="catalytic activity">
    <reaction evidence="1">
        <text>ATP + protein L-histidine = ADP + protein N-phospho-L-histidine.</text>
        <dbReference type="EC" id="2.7.13.3"/>
    </reaction>
</comment>
<comment type="subcellular location">
    <subcellularLocation>
        <location evidence="1">Cytoplasm</location>
    </subcellularLocation>
</comment>
<comment type="PTM">
    <text evidence="1">Autophosphorylated.</text>
</comment>
<evidence type="ECO:0000250" key="1">
    <source>
        <dbReference type="UniProtKB" id="P9WGL5"/>
    </source>
</evidence>
<evidence type="ECO:0000255" key="2"/>
<evidence type="ECO:0000255" key="3">
    <source>
        <dbReference type="PROSITE-ProRule" id="PRU00107"/>
    </source>
</evidence>
<protein>
    <recommendedName>
        <fullName evidence="1">Sensor histidine kinase PdtaS</fullName>
        <ecNumber evidence="1">2.7.13.3</ecNumber>
    </recommendedName>
</protein>
<sequence length="501" mass="54012">MSTLGDLLAEHTVLPGSAVDHLHAVVGEWQLLADLSFADYLMWVRRDDGVLVCVAQCRPNTGPTVVHTDAVGTVVAANSMPLVAATFSGGVPGREGAVGQQNSCQHDGHSVEVSPVRFGDQVVAVLTRHQPELAARRRSGHLETAYRLCATDLLRMLAEGTFPDAGDVAMSRSSPRAGDGFIRLDVDGVVSYASPNALSAYHRMGLTTELEGVNLIDATRPLISDPFEAHEVDEHVQDLLAGDGKGMRMEVDAGGATVLLRTLPLVVAGRNVGAAILIRDVTEVKRRDRALISKDATIREIHHRVKNNLQTVAALLRLQARRTSNAEGREALIESVRRVSSIALVHDALSMSVDEQVNLDEVIDRILPIMNDVASVDRPIRINRVGDLGVLDSDRATALIMVITELVQNAIEHAFDPAAAEGSVTIRAERSARWLDVVVHDDGLGLPQGFSLEKSDSLGLQIVRTLVSAELDGSLGMRDARERGTDVVLRVPVGRRGRLML</sequence>
<accession>P9WGL4</accession>
<accession>L0TDI0</accession>
<accession>O05846</accession>
<accession>Q7D5W7</accession>
<organism>
    <name type="scientific">Mycobacterium tuberculosis (strain CDC 1551 / Oshkosh)</name>
    <dbReference type="NCBI Taxonomy" id="83331"/>
    <lineage>
        <taxon>Bacteria</taxon>
        <taxon>Bacillati</taxon>
        <taxon>Actinomycetota</taxon>
        <taxon>Actinomycetes</taxon>
        <taxon>Mycobacteriales</taxon>
        <taxon>Mycobacteriaceae</taxon>
        <taxon>Mycobacterium</taxon>
        <taxon>Mycobacterium tuberculosis complex</taxon>
    </lineage>
</organism>
<gene>
    <name type="primary">pdtaS</name>
    <name type="ordered locus">MT3316</name>
</gene>
<proteinExistence type="inferred from homology"/>
<reference key="1">
    <citation type="journal article" date="2002" name="J. Bacteriol.">
        <title>Whole-genome comparison of Mycobacterium tuberculosis clinical and laboratory strains.</title>
        <authorList>
            <person name="Fleischmann R.D."/>
            <person name="Alland D."/>
            <person name="Eisen J.A."/>
            <person name="Carpenter L."/>
            <person name="White O."/>
            <person name="Peterson J.D."/>
            <person name="DeBoy R.T."/>
            <person name="Dodson R.J."/>
            <person name="Gwinn M.L."/>
            <person name="Haft D.H."/>
            <person name="Hickey E.K."/>
            <person name="Kolonay J.F."/>
            <person name="Nelson W.C."/>
            <person name="Umayam L.A."/>
            <person name="Ermolaeva M.D."/>
            <person name="Salzberg S.L."/>
            <person name="Delcher A."/>
            <person name="Utterback T.R."/>
            <person name="Weidman J.F."/>
            <person name="Khouri H.M."/>
            <person name="Gill J."/>
            <person name="Mikula A."/>
            <person name="Bishai W."/>
            <person name="Jacobs W.R. Jr."/>
            <person name="Venter J.C."/>
            <person name="Fraser C.M."/>
        </authorList>
    </citation>
    <scope>NUCLEOTIDE SEQUENCE [LARGE SCALE GENOMIC DNA]</scope>
    <source>
        <strain>CDC 1551 / Oshkosh</strain>
    </source>
</reference>